<organism>
    <name type="scientific">Polynucleobacter asymbioticus (strain DSM 18221 / CIP 109841 / QLW-P1DMWA-1)</name>
    <name type="common">Polynucleobacter necessarius subsp. asymbioticus</name>
    <dbReference type="NCBI Taxonomy" id="312153"/>
    <lineage>
        <taxon>Bacteria</taxon>
        <taxon>Pseudomonadati</taxon>
        <taxon>Pseudomonadota</taxon>
        <taxon>Betaproteobacteria</taxon>
        <taxon>Burkholderiales</taxon>
        <taxon>Burkholderiaceae</taxon>
        <taxon>Polynucleobacter</taxon>
    </lineage>
</organism>
<reference key="1">
    <citation type="journal article" date="2012" name="Stand. Genomic Sci.">
        <title>Complete genome sequence of Polynucleobacter necessarius subsp. asymbioticus type strain (QLW-P1DMWA-1(T)).</title>
        <authorList>
            <person name="Meincke L."/>
            <person name="Copeland A."/>
            <person name="Lapidus A."/>
            <person name="Lucas S."/>
            <person name="Berry K.W."/>
            <person name="Del Rio T.G."/>
            <person name="Hammon N."/>
            <person name="Dalin E."/>
            <person name="Tice H."/>
            <person name="Pitluck S."/>
            <person name="Richardson P."/>
            <person name="Bruce D."/>
            <person name="Goodwin L."/>
            <person name="Han C."/>
            <person name="Tapia R."/>
            <person name="Detter J.C."/>
            <person name="Schmutz J."/>
            <person name="Brettin T."/>
            <person name="Larimer F."/>
            <person name="Land M."/>
            <person name="Hauser L."/>
            <person name="Kyrpides N.C."/>
            <person name="Ivanova N."/>
            <person name="Goker M."/>
            <person name="Woyke T."/>
            <person name="Wu Q.L."/>
            <person name="Pockl M."/>
            <person name="Hahn M.W."/>
            <person name="Klenk H.P."/>
        </authorList>
    </citation>
    <scope>NUCLEOTIDE SEQUENCE [LARGE SCALE GENOMIC DNA]</scope>
    <source>
        <strain>DSM 18221 / CIP 109841 / QLW-P1DMWA-1</strain>
    </source>
</reference>
<evidence type="ECO:0000255" key="1">
    <source>
        <dbReference type="HAMAP-Rule" id="MF_01013"/>
    </source>
</evidence>
<feature type="chain" id="PRO_1000084070" description="Imidazole glycerol phosphate synthase subunit HisF">
    <location>
        <begin position="1"/>
        <end position="252"/>
    </location>
</feature>
<feature type="active site" evidence="1">
    <location>
        <position position="11"/>
    </location>
</feature>
<feature type="active site" evidence="1">
    <location>
        <position position="130"/>
    </location>
</feature>
<accession>A4SV20</accession>
<dbReference type="EC" id="4.3.2.10" evidence="1"/>
<dbReference type="EMBL" id="CP000655">
    <property type="protein sequence ID" value="ABP33334.1"/>
    <property type="molecule type" value="Genomic_DNA"/>
</dbReference>
<dbReference type="RefSeq" id="WP_011901959.1">
    <property type="nucleotide sequence ID" value="NC_009379.1"/>
</dbReference>
<dbReference type="SMR" id="A4SV20"/>
<dbReference type="GeneID" id="31480459"/>
<dbReference type="KEGG" id="pnu:Pnuc_0112"/>
<dbReference type="eggNOG" id="COG0107">
    <property type="taxonomic scope" value="Bacteria"/>
</dbReference>
<dbReference type="HOGENOM" id="CLU_048577_4_0_4"/>
<dbReference type="UniPathway" id="UPA00031">
    <property type="reaction ID" value="UER00010"/>
</dbReference>
<dbReference type="Proteomes" id="UP000000231">
    <property type="component" value="Chromosome"/>
</dbReference>
<dbReference type="GO" id="GO:0005737">
    <property type="term" value="C:cytoplasm"/>
    <property type="evidence" value="ECO:0007669"/>
    <property type="project" value="UniProtKB-SubCell"/>
</dbReference>
<dbReference type="GO" id="GO:0000107">
    <property type="term" value="F:imidazoleglycerol-phosphate synthase activity"/>
    <property type="evidence" value="ECO:0007669"/>
    <property type="project" value="UniProtKB-UniRule"/>
</dbReference>
<dbReference type="GO" id="GO:0016829">
    <property type="term" value="F:lyase activity"/>
    <property type="evidence" value="ECO:0007669"/>
    <property type="project" value="UniProtKB-KW"/>
</dbReference>
<dbReference type="GO" id="GO:0000105">
    <property type="term" value="P:L-histidine biosynthetic process"/>
    <property type="evidence" value="ECO:0007669"/>
    <property type="project" value="UniProtKB-UniRule"/>
</dbReference>
<dbReference type="CDD" id="cd04731">
    <property type="entry name" value="HisF"/>
    <property type="match status" value="1"/>
</dbReference>
<dbReference type="FunFam" id="3.20.20.70:FF:000006">
    <property type="entry name" value="Imidazole glycerol phosphate synthase subunit HisF"/>
    <property type="match status" value="1"/>
</dbReference>
<dbReference type="Gene3D" id="3.20.20.70">
    <property type="entry name" value="Aldolase class I"/>
    <property type="match status" value="1"/>
</dbReference>
<dbReference type="HAMAP" id="MF_01013">
    <property type="entry name" value="HisF"/>
    <property type="match status" value="1"/>
</dbReference>
<dbReference type="InterPro" id="IPR013785">
    <property type="entry name" value="Aldolase_TIM"/>
</dbReference>
<dbReference type="InterPro" id="IPR006062">
    <property type="entry name" value="His_biosynth"/>
</dbReference>
<dbReference type="InterPro" id="IPR004651">
    <property type="entry name" value="HisF"/>
</dbReference>
<dbReference type="InterPro" id="IPR050064">
    <property type="entry name" value="IGPS_HisA/HisF"/>
</dbReference>
<dbReference type="InterPro" id="IPR011060">
    <property type="entry name" value="RibuloseP-bd_barrel"/>
</dbReference>
<dbReference type="NCBIfam" id="TIGR00735">
    <property type="entry name" value="hisF"/>
    <property type="match status" value="1"/>
</dbReference>
<dbReference type="PANTHER" id="PTHR21235:SF2">
    <property type="entry name" value="IMIDAZOLE GLYCEROL PHOSPHATE SYNTHASE HISHF"/>
    <property type="match status" value="1"/>
</dbReference>
<dbReference type="PANTHER" id="PTHR21235">
    <property type="entry name" value="IMIDAZOLE GLYCEROL PHOSPHATE SYNTHASE SUBUNIT HISF/H IGP SYNTHASE SUBUNIT HISF/H"/>
    <property type="match status" value="1"/>
</dbReference>
<dbReference type="Pfam" id="PF00977">
    <property type="entry name" value="His_biosynth"/>
    <property type="match status" value="1"/>
</dbReference>
<dbReference type="SUPFAM" id="SSF51366">
    <property type="entry name" value="Ribulose-phoshate binding barrel"/>
    <property type="match status" value="1"/>
</dbReference>
<proteinExistence type="inferred from homology"/>
<protein>
    <recommendedName>
        <fullName evidence="1">Imidazole glycerol phosphate synthase subunit HisF</fullName>
        <ecNumber evidence="1">4.3.2.10</ecNumber>
    </recommendedName>
    <alternativeName>
        <fullName evidence="1">IGP synthase cyclase subunit</fullName>
    </alternativeName>
    <alternativeName>
        <fullName evidence="1">IGP synthase subunit HisF</fullName>
    </alternativeName>
    <alternativeName>
        <fullName evidence="1">ImGP synthase subunit HisF</fullName>
        <shortName evidence="1">IGPS subunit HisF</shortName>
    </alternativeName>
</protein>
<keyword id="KW-0028">Amino-acid biosynthesis</keyword>
<keyword id="KW-0963">Cytoplasm</keyword>
<keyword id="KW-0368">Histidine biosynthesis</keyword>
<keyword id="KW-0456">Lyase</keyword>
<keyword id="KW-1185">Reference proteome</keyword>
<gene>
    <name evidence="1" type="primary">hisF</name>
    <name type="ordered locus">Pnuc_0112</name>
</gene>
<name>HIS6_POLAQ</name>
<comment type="function">
    <text evidence="1">IGPS catalyzes the conversion of PRFAR and glutamine to IGP, AICAR and glutamate. The HisF subunit catalyzes the cyclization activity that produces IGP and AICAR from PRFAR using the ammonia provided by the HisH subunit.</text>
</comment>
<comment type="catalytic activity">
    <reaction evidence="1">
        <text>5-[(5-phospho-1-deoxy-D-ribulos-1-ylimino)methylamino]-1-(5-phospho-beta-D-ribosyl)imidazole-4-carboxamide + L-glutamine = D-erythro-1-(imidazol-4-yl)glycerol 3-phosphate + 5-amino-1-(5-phospho-beta-D-ribosyl)imidazole-4-carboxamide + L-glutamate + H(+)</text>
        <dbReference type="Rhea" id="RHEA:24793"/>
        <dbReference type="ChEBI" id="CHEBI:15378"/>
        <dbReference type="ChEBI" id="CHEBI:29985"/>
        <dbReference type="ChEBI" id="CHEBI:58278"/>
        <dbReference type="ChEBI" id="CHEBI:58359"/>
        <dbReference type="ChEBI" id="CHEBI:58475"/>
        <dbReference type="ChEBI" id="CHEBI:58525"/>
        <dbReference type="EC" id="4.3.2.10"/>
    </reaction>
</comment>
<comment type="pathway">
    <text evidence="1">Amino-acid biosynthesis; L-histidine biosynthesis; L-histidine from 5-phospho-alpha-D-ribose 1-diphosphate: step 5/9.</text>
</comment>
<comment type="subunit">
    <text evidence="1">Heterodimer of HisH and HisF.</text>
</comment>
<comment type="subcellular location">
    <subcellularLocation>
        <location evidence="1">Cytoplasm</location>
    </subcellularLocation>
</comment>
<comment type="similarity">
    <text evidence="1">Belongs to the HisA/HisF family.</text>
</comment>
<sequence>MLTKRIIPCLDVTAGRVVKGVNFVGLRDAGDPVEIARRYDSQGADELTFLDITATSDGRDLILHIIENVASQVFIPLTVGGGVRAVADVRRLLNAGADKVSMNSSAVANPDLVSDAAAYYGSQCIVVAIDAKQTEAGNWEVFTHGGRTATGMDVVEWAKEVAKRGAGEILLTSMNRDGSKDGFDLALTAAVSDAVSVPVIASGGVGNLQHLVDGITKGHADAVLAASIFHYGEYTVQEAKEYMAAQGVPVRI</sequence>